<name>CLPP_ADICA</name>
<accession>Q85FJ8</accession>
<comment type="function">
    <text evidence="1">Cleaves peptides in various proteins in a process that requires ATP hydrolysis. Has a chymotrypsin-like activity. Plays a major role in the degradation of misfolded proteins.</text>
</comment>
<comment type="catalytic activity">
    <reaction evidence="1">
        <text>Hydrolysis of proteins to small peptides in the presence of ATP and magnesium. alpha-casein is the usual test substrate. In the absence of ATP, only oligopeptides shorter than five residues are hydrolyzed (such as succinyl-Leu-Tyr-|-NHMec, and Leu-Tyr-Leu-|-Tyr-Trp, in which cleavage of the -Tyr-|-Leu- and -Tyr-|-Trp bonds also occurs).</text>
        <dbReference type="EC" id="3.4.21.92"/>
    </reaction>
</comment>
<comment type="subunit">
    <text>Component of the chloroplastic Clp protease core complex.</text>
</comment>
<comment type="subcellular location">
    <subcellularLocation>
        <location evidence="1">Plastid</location>
        <location evidence="1">Chloroplast stroma</location>
    </subcellularLocation>
</comment>
<comment type="RNA editing">
    <location>
        <position position="65" evidence="2"/>
    </location>
    <location>
        <position position="105" evidence="2"/>
    </location>
    <location>
        <position position="107" evidence="2"/>
    </location>
    <location>
        <position position="147" evidence="2"/>
    </location>
    <location>
        <position position="148" evidence="2"/>
    </location>
    <location>
        <position position="190" evidence="2"/>
    </location>
</comment>
<comment type="similarity">
    <text evidence="1">Belongs to the peptidase S14 family.</text>
</comment>
<protein>
    <recommendedName>
        <fullName evidence="1">ATP-dependent Clp protease proteolytic subunit</fullName>
        <ecNumber evidence="1">3.4.21.92</ecNumber>
    </recommendedName>
    <alternativeName>
        <fullName evidence="1">Endopeptidase Clp</fullName>
    </alternativeName>
</protein>
<geneLocation type="chloroplast"/>
<sequence>MPIGVPKVPFRLPGEEDAVWVDVYNRLYRERLLFLGQQVDDEIANQLIGIMMYLNSEDQAKDMYLYVNSPGGAVLAGISVYDAMQFVVPDVHTICMGLAASMGSFILAGGEITRRIALPHARVMIHQPASSYYDGQAGECVMEAEEVLKLRDCITKVYAQRTGKPLWLISEDMERDVFLSAEEAQDYGVVDLVAVENVSR</sequence>
<feature type="chain" id="PRO_0000179731" description="ATP-dependent Clp protease proteolytic subunit">
    <location>
        <begin position="1"/>
        <end position="200"/>
    </location>
</feature>
<feature type="active site" description="Nucleophile" evidence="1">
    <location>
        <position position="101"/>
    </location>
</feature>
<feature type="active site" evidence="1">
    <location>
        <position position="126"/>
    </location>
</feature>
<organism>
    <name type="scientific">Adiantum capillus-veneris</name>
    <name type="common">Maidenhair fern</name>
    <dbReference type="NCBI Taxonomy" id="13818"/>
    <lineage>
        <taxon>Eukaryota</taxon>
        <taxon>Viridiplantae</taxon>
        <taxon>Streptophyta</taxon>
        <taxon>Embryophyta</taxon>
        <taxon>Tracheophyta</taxon>
        <taxon>Polypodiopsida</taxon>
        <taxon>Polypodiidae</taxon>
        <taxon>Polypodiales</taxon>
        <taxon>Pteridineae</taxon>
        <taxon>Pteridaceae</taxon>
        <taxon>Vittarioideae</taxon>
        <taxon>Adiantum</taxon>
    </lineage>
</organism>
<keyword id="KW-0150">Chloroplast</keyword>
<keyword id="KW-0378">Hydrolase</keyword>
<keyword id="KW-0934">Plastid</keyword>
<keyword id="KW-0645">Protease</keyword>
<keyword id="KW-0691">RNA editing</keyword>
<keyword id="KW-0720">Serine protease</keyword>
<dbReference type="EC" id="3.4.21.92" evidence="1"/>
<dbReference type="EMBL" id="AY178864">
    <property type="protein sequence ID" value="AAP29415.2"/>
    <property type="molecule type" value="Genomic_DNA"/>
</dbReference>
<dbReference type="RefSeq" id="NP_848084.2">
    <property type="nucleotide sequence ID" value="NC_004766.1"/>
</dbReference>
<dbReference type="SMR" id="Q85FJ8"/>
<dbReference type="MEROPS" id="S14.002"/>
<dbReference type="GeneID" id="807394"/>
<dbReference type="GO" id="GO:0009570">
    <property type="term" value="C:chloroplast stroma"/>
    <property type="evidence" value="ECO:0007669"/>
    <property type="project" value="UniProtKB-SubCell"/>
</dbReference>
<dbReference type="GO" id="GO:0009368">
    <property type="term" value="C:endopeptidase Clp complex"/>
    <property type="evidence" value="ECO:0007669"/>
    <property type="project" value="TreeGrafter"/>
</dbReference>
<dbReference type="GO" id="GO:0004176">
    <property type="term" value="F:ATP-dependent peptidase activity"/>
    <property type="evidence" value="ECO:0007669"/>
    <property type="project" value="InterPro"/>
</dbReference>
<dbReference type="GO" id="GO:0051117">
    <property type="term" value="F:ATPase binding"/>
    <property type="evidence" value="ECO:0007669"/>
    <property type="project" value="TreeGrafter"/>
</dbReference>
<dbReference type="GO" id="GO:0004252">
    <property type="term" value="F:serine-type endopeptidase activity"/>
    <property type="evidence" value="ECO:0007669"/>
    <property type="project" value="UniProtKB-UniRule"/>
</dbReference>
<dbReference type="GO" id="GO:0006515">
    <property type="term" value="P:protein quality control for misfolded or incompletely synthesized proteins"/>
    <property type="evidence" value="ECO:0007669"/>
    <property type="project" value="TreeGrafter"/>
</dbReference>
<dbReference type="CDD" id="cd07017">
    <property type="entry name" value="S14_ClpP_2"/>
    <property type="match status" value="1"/>
</dbReference>
<dbReference type="FunFam" id="3.90.226.10:FF:000006">
    <property type="entry name" value="ATP-dependent Clp protease proteolytic subunit"/>
    <property type="match status" value="1"/>
</dbReference>
<dbReference type="Gene3D" id="3.90.226.10">
    <property type="entry name" value="2-enoyl-CoA Hydratase, Chain A, domain 1"/>
    <property type="match status" value="1"/>
</dbReference>
<dbReference type="HAMAP" id="MF_00444">
    <property type="entry name" value="ClpP"/>
    <property type="match status" value="1"/>
</dbReference>
<dbReference type="InterPro" id="IPR001907">
    <property type="entry name" value="ClpP"/>
</dbReference>
<dbReference type="InterPro" id="IPR029045">
    <property type="entry name" value="ClpP/crotonase-like_dom_sf"/>
</dbReference>
<dbReference type="InterPro" id="IPR023562">
    <property type="entry name" value="ClpP/TepA"/>
</dbReference>
<dbReference type="InterPro" id="IPR033135">
    <property type="entry name" value="ClpP_His_AS"/>
</dbReference>
<dbReference type="InterPro" id="IPR018215">
    <property type="entry name" value="ClpP_Ser_AS"/>
</dbReference>
<dbReference type="PANTHER" id="PTHR10381">
    <property type="entry name" value="ATP-DEPENDENT CLP PROTEASE PROTEOLYTIC SUBUNIT"/>
    <property type="match status" value="1"/>
</dbReference>
<dbReference type="PANTHER" id="PTHR10381:SF15">
    <property type="entry name" value="CHLOROPLASTIC ATP-DEPENDENT CLP PROTEASE PROTEOLYTIC SUBUNIT 1"/>
    <property type="match status" value="1"/>
</dbReference>
<dbReference type="Pfam" id="PF00574">
    <property type="entry name" value="CLP_protease"/>
    <property type="match status" value="1"/>
</dbReference>
<dbReference type="PRINTS" id="PR00127">
    <property type="entry name" value="CLPPROTEASEP"/>
</dbReference>
<dbReference type="SUPFAM" id="SSF52096">
    <property type="entry name" value="ClpP/crotonase"/>
    <property type="match status" value="1"/>
</dbReference>
<dbReference type="PROSITE" id="PS00382">
    <property type="entry name" value="CLP_PROTEASE_HIS"/>
    <property type="match status" value="1"/>
</dbReference>
<dbReference type="PROSITE" id="PS00381">
    <property type="entry name" value="CLP_PROTEASE_SER"/>
    <property type="match status" value="1"/>
</dbReference>
<proteinExistence type="evidence at transcript level"/>
<evidence type="ECO:0000255" key="1">
    <source>
        <dbReference type="HAMAP-Rule" id="MF_00444"/>
    </source>
</evidence>
<evidence type="ECO:0000269" key="2">
    <source>
    </source>
</evidence>
<gene>
    <name evidence="1" type="primary">clpP</name>
</gene>
<reference key="1">
    <citation type="journal article" date="2003" name="DNA Res.">
        <title>Complete nucleotide sequence of the chloroplast genome from a leptosporangiate fern, Adiantum capillus-veneris L.</title>
        <authorList>
            <person name="Wolf P.G."/>
            <person name="Rowe C.A."/>
            <person name="Sinclair R.B."/>
            <person name="Hasebe M."/>
        </authorList>
    </citation>
    <scope>NUCLEOTIDE SEQUENCE [LARGE SCALE GENOMIC DNA]</scope>
</reference>
<reference key="2">
    <citation type="journal article" date="2004" name="Gene">
        <title>High levels of RNA editing in a vascular plant chloroplast genome: analysis of transcripts from the fern Adiantum capillus-veneris.</title>
        <authorList>
            <person name="Wolf P.G."/>
            <person name="Rowe C.A."/>
            <person name="Hasebe M."/>
        </authorList>
    </citation>
    <scope>NUCLEOTIDE SEQUENCE [GENOMIC DNA]</scope>
    <scope>RNA EDITING</scope>
    <source>
        <tissue>Frond</tissue>
    </source>
</reference>